<organism>
    <name type="scientific">Porphyromonas gingivalis (strain ATCC BAA-308 / W83)</name>
    <dbReference type="NCBI Taxonomy" id="242619"/>
    <lineage>
        <taxon>Bacteria</taxon>
        <taxon>Pseudomonadati</taxon>
        <taxon>Bacteroidota</taxon>
        <taxon>Bacteroidia</taxon>
        <taxon>Bacteroidales</taxon>
        <taxon>Porphyromonadaceae</taxon>
        <taxon>Porphyromonas</taxon>
    </lineage>
</organism>
<gene>
    <name evidence="1" type="primary">prfA</name>
    <name type="ordered locus">PG_0074</name>
</gene>
<proteinExistence type="inferred from homology"/>
<reference key="1">
    <citation type="journal article" date="2003" name="J. Bacteriol.">
        <title>Complete genome sequence of the oral pathogenic bacterium Porphyromonas gingivalis strain W83.</title>
        <authorList>
            <person name="Nelson K.E."/>
            <person name="Fleischmann R.D."/>
            <person name="DeBoy R.T."/>
            <person name="Paulsen I.T."/>
            <person name="Fouts D.E."/>
            <person name="Eisen J.A."/>
            <person name="Daugherty S.C."/>
            <person name="Dodson R.J."/>
            <person name="Durkin A.S."/>
            <person name="Gwinn M.L."/>
            <person name="Haft D.H."/>
            <person name="Kolonay J.F."/>
            <person name="Nelson W.C."/>
            <person name="Mason T.M."/>
            <person name="Tallon L."/>
            <person name="Gray J."/>
            <person name="Granger D."/>
            <person name="Tettelin H."/>
            <person name="Dong H."/>
            <person name="Galvin J.L."/>
            <person name="Duncan M.J."/>
            <person name="Dewhirst F.E."/>
            <person name="Fraser C.M."/>
        </authorList>
    </citation>
    <scope>NUCLEOTIDE SEQUENCE [LARGE SCALE GENOMIC DNA]</scope>
    <source>
        <strain>ATCC BAA-308 / W83</strain>
    </source>
</reference>
<comment type="function">
    <text evidence="1">Peptide chain release factor 1 directs the termination of translation in response to the peptide chain termination codons UAG and UAA.</text>
</comment>
<comment type="subcellular location">
    <subcellularLocation>
        <location evidence="1">Cytoplasm</location>
    </subcellularLocation>
</comment>
<comment type="PTM">
    <text evidence="1">Methylated by PrmC. Methylation increases the termination efficiency of RF1.</text>
</comment>
<comment type="similarity">
    <text evidence="1">Belongs to the prokaryotic/mitochondrial release factor family.</text>
</comment>
<evidence type="ECO:0000255" key="1">
    <source>
        <dbReference type="HAMAP-Rule" id="MF_00093"/>
    </source>
</evidence>
<accession>Q7MXT5</accession>
<sequence>MSENNLLDRLDGLESRFEEISTLITDPAVIADMKRFTKLSKEYRDLEKIHTAGRDYRNLLANIEEAKHTMAKESDEELREMAREMLAEANERLPILEEEIKMLLIPANPEDDKNAIVEIRGGTGGDEAALFAGDLYRMYVKYCESKGWQVEVTDLSEGATGGYKEIVFSVKGEGVYGILKYESGVHRVQRVPATETQGRIHTSAATVAVLPEAEEVDVEINPADIEMQTSRSGGAGGQNVNKVETKVQLTHKPTGMVVVCQQARSQIANRELAMQMLRSKLYDIELSKHNEAIAARRKTMVSTGDRSAKIRTYNYPQGRVTDHRINMTVYNLSAVMDGEVQPFIDALIIAENVERMKEAAL</sequence>
<feature type="chain" id="PRO_0000177722" description="Peptide chain release factor 1">
    <location>
        <begin position="1"/>
        <end position="361"/>
    </location>
</feature>
<feature type="modified residue" description="N5-methylglutamine" evidence="1">
    <location>
        <position position="238"/>
    </location>
</feature>
<keyword id="KW-0963">Cytoplasm</keyword>
<keyword id="KW-0488">Methylation</keyword>
<keyword id="KW-0648">Protein biosynthesis</keyword>
<keyword id="KW-1185">Reference proteome</keyword>
<name>RF1_PORGI</name>
<protein>
    <recommendedName>
        <fullName evidence="1">Peptide chain release factor 1</fullName>
        <shortName evidence="1">RF-1</shortName>
    </recommendedName>
</protein>
<dbReference type="EMBL" id="AE015924">
    <property type="protein sequence ID" value="AAQ65323.1"/>
    <property type="molecule type" value="Genomic_DNA"/>
</dbReference>
<dbReference type="RefSeq" id="WP_005873982.1">
    <property type="nucleotide sequence ID" value="NC_002950.2"/>
</dbReference>
<dbReference type="SMR" id="Q7MXT5"/>
<dbReference type="STRING" id="242619.PG_0074"/>
<dbReference type="EnsemblBacteria" id="AAQ65323">
    <property type="protein sequence ID" value="AAQ65323"/>
    <property type="gene ID" value="PG_0074"/>
</dbReference>
<dbReference type="KEGG" id="pgi:PG_0074"/>
<dbReference type="eggNOG" id="COG0216">
    <property type="taxonomic scope" value="Bacteria"/>
</dbReference>
<dbReference type="HOGENOM" id="CLU_036856_0_1_10"/>
<dbReference type="Proteomes" id="UP000000588">
    <property type="component" value="Chromosome"/>
</dbReference>
<dbReference type="GO" id="GO:0005737">
    <property type="term" value="C:cytoplasm"/>
    <property type="evidence" value="ECO:0007669"/>
    <property type="project" value="UniProtKB-SubCell"/>
</dbReference>
<dbReference type="GO" id="GO:0016149">
    <property type="term" value="F:translation release factor activity, codon specific"/>
    <property type="evidence" value="ECO:0007669"/>
    <property type="project" value="UniProtKB-UniRule"/>
</dbReference>
<dbReference type="FunFam" id="3.30.160.20:FF:000004">
    <property type="entry name" value="Peptide chain release factor 1"/>
    <property type="match status" value="1"/>
</dbReference>
<dbReference type="FunFam" id="3.30.70.1660:FF:000002">
    <property type="entry name" value="Peptide chain release factor 1"/>
    <property type="match status" value="1"/>
</dbReference>
<dbReference type="Gene3D" id="3.30.160.20">
    <property type="match status" value="1"/>
</dbReference>
<dbReference type="Gene3D" id="3.30.70.1660">
    <property type="match status" value="1"/>
</dbReference>
<dbReference type="Gene3D" id="6.10.140.1950">
    <property type="match status" value="1"/>
</dbReference>
<dbReference type="HAMAP" id="MF_00093">
    <property type="entry name" value="Rel_fac_1"/>
    <property type="match status" value="1"/>
</dbReference>
<dbReference type="InterPro" id="IPR005139">
    <property type="entry name" value="PCRF"/>
</dbReference>
<dbReference type="InterPro" id="IPR000352">
    <property type="entry name" value="Pep_chain_release_fac_I"/>
</dbReference>
<dbReference type="InterPro" id="IPR045853">
    <property type="entry name" value="Pep_chain_release_fac_I_sf"/>
</dbReference>
<dbReference type="InterPro" id="IPR050057">
    <property type="entry name" value="Prokaryotic/Mito_RF"/>
</dbReference>
<dbReference type="InterPro" id="IPR004373">
    <property type="entry name" value="RF-1"/>
</dbReference>
<dbReference type="NCBIfam" id="TIGR00019">
    <property type="entry name" value="prfA"/>
    <property type="match status" value="1"/>
</dbReference>
<dbReference type="NCBIfam" id="NF001859">
    <property type="entry name" value="PRK00591.1"/>
    <property type="match status" value="1"/>
</dbReference>
<dbReference type="PANTHER" id="PTHR43804">
    <property type="entry name" value="LD18447P"/>
    <property type="match status" value="1"/>
</dbReference>
<dbReference type="PANTHER" id="PTHR43804:SF7">
    <property type="entry name" value="LD18447P"/>
    <property type="match status" value="1"/>
</dbReference>
<dbReference type="Pfam" id="PF03462">
    <property type="entry name" value="PCRF"/>
    <property type="match status" value="1"/>
</dbReference>
<dbReference type="Pfam" id="PF00472">
    <property type="entry name" value="RF-1"/>
    <property type="match status" value="1"/>
</dbReference>
<dbReference type="SMART" id="SM00937">
    <property type="entry name" value="PCRF"/>
    <property type="match status" value="1"/>
</dbReference>
<dbReference type="SUPFAM" id="SSF75620">
    <property type="entry name" value="Release factor"/>
    <property type="match status" value="1"/>
</dbReference>
<dbReference type="PROSITE" id="PS00745">
    <property type="entry name" value="RF_PROK_I"/>
    <property type="match status" value="1"/>
</dbReference>